<reference key="1">
    <citation type="journal article" date="1998" name="FEMS Microbiol. Lett.">
        <title>Structure and evolution of the leucine plasmids carried by the endosymbiont (Buchnera aphidicola) from aphids of the family Aphididae.</title>
        <authorList>
            <person name="Silva F.J."/>
            <person name="van Ham R.C.H.J."/>
            <person name="Sabater B."/>
            <person name="Latorre A."/>
        </authorList>
    </citation>
    <scope>NUCLEOTIDE SEQUENCE [GENOMIC DNA]</scope>
</reference>
<sequence>MENIIEKIIYASRWLMFPVNIGLSFGFILLTLKFFQQIIFILPNILTMSESGLVLIVLSLIDIALVGGLLVMVMFSGYENFISKMDIKDDSKRLGWMGTMDVNSIKNKVASSIVAISSVHLLRLFMEAEKILDNKIILCVIIHLTFVLSAFGMAYIDKMSKKIKNKK</sequence>
<proteinExistence type="inferred from homology"/>
<geneLocation type="plasmid">
    <name>pBPp1</name>
</geneLocation>
<protein>
    <recommendedName>
        <fullName>UPF0114 protein in repA1-repA2 intergenic region</fullName>
    </recommendedName>
</protein>
<feature type="chain" id="PRO_0000214387" description="UPF0114 protein in repA1-repA2 intergenic region">
    <location>
        <begin position="1"/>
        <end position="167"/>
    </location>
</feature>
<feature type="transmembrane region" description="Helical" evidence="1">
    <location>
        <begin position="15"/>
        <end position="35"/>
    </location>
</feature>
<feature type="transmembrane region" description="Helical" evidence="1">
    <location>
        <begin position="53"/>
        <end position="73"/>
    </location>
</feature>
<feature type="transmembrane region" description="Helical" evidence="1">
    <location>
        <begin position="136"/>
        <end position="156"/>
    </location>
</feature>
<evidence type="ECO:0000255" key="1"/>
<evidence type="ECO:0000305" key="2"/>
<accession>Q9ZEZ4</accession>
<keyword id="KW-1003">Cell membrane</keyword>
<keyword id="KW-0472">Membrane</keyword>
<keyword id="KW-0614">Plasmid</keyword>
<keyword id="KW-0812">Transmembrane</keyword>
<keyword id="KW-1133">Transmembrane helix</keyword>
<comment type="subcellular location">
    <subcellularLocation>
        <location evidence="2">Cell membrane</location>
        <topology evidence="2">Multi-pass membrane protein</topology>
    </subcellularLocation>
</comment>
<comment type="similarity">
    <text evidence="2">Belongs to the UPF0114 family.</text>
</comment>
<name>YREP_BUCPP</name>
<organism>
    <name type="scientific">Buchnera aphidicola subsp. Pterocomma populeum</name>
    <dbReference type="NCBI Taxonomy" id="98792"/>
    <lineage>
        <taxon>Bacteria</taxon>
        <taxon>Pseudomonadati</taxon>
        <taxon>Pseudomonadota</taxon>
        <taxon>Gammaproteobacteria</taxon>
        <taxon>Enterobacterales</taxon>
        <taxon>Erwiniaceae</taxon>
        <taxon>Buchnera</taxon>
    </lineage>
</organism>
<dbReference type="EMBL" id="AJ006877">
    <property type="protein sequence ID" value="CAA07299.1"/>
    <property type="molecule type" value="Genomic_DNA"/>
</dbReference>
<dbReference type="GO" id="GO:0005886">
    <property type="term" value="C:plasma membrane"/>
    <property type="evidence" value="ECO:0007669"/>
    <property type="project" value="UniProtKB-SubCell"/>
</dbReference>
<dbReference type="HAMAP" id="MF_00143">
    <property type="entry name" value="UPF0114"/>
    <property type="match status" value="1"/>
</dbReference>
<dbReference type="InterPro" id="IPR005134">
    <property type="entry name" value="UPF0114"/>
</dbReference>
<dbReference type="InterPro" id="IPR020761">
    <property type="entry name" value="UPF0114_bac"/>
</dbReference>
<dbReference type="NCBIfam" id="TIGR00645">
    <property type="entry name" value="HI0507"/>
    <property type="match status" value="1"/>
</dbReference>
<dbReference type="PANTHER" id="PTHR38596">
    <property type="entry name" value="UPF0114 PROTEIN YQHA"/>
    <property type="match status" value="1"/>
</dbReference>
<dbReference type="PANTHER" id="PTHR38596:SF1">
    <property type="entry name" value="UPF0114 PROTEIN YQHA"/>
    <property type="match status" value="1"/>
</dbReference>
<dbReference type="Pfam" id="PF03350">
    <property type="entry name" value="UPF0114"/>
    <property type="match status" value="1"/>
</dbReference>